<protein>
    <recommendedName>
        <fullName>Chitin synthase export chaperone</fullName>
    </recommendedName>
</protein>
<keyword id="KW-0961">Cell wall biogenesis/degradation</keyword>
<keyword id="KW-0256">Endoplasmic reticulum</keyword>
<keyword id="KW-0472">Membrane</keyword>
<keyword id="KW-0653">Protein transport</keyword>
<keyword id="KW-1185">Reference proteome</keyword>
<keyword id="KW-0812">Transmembrane</keyword>
<keyword id="KW-1133">Transmembrane helix</keyword>
<keyword id="KW-0813">Transport</keyword>
<accession>Q1DKX4</accession>
<accession>J3K236</accession>
<name>CHS7_COCIM</name>
<organism>
    <name type="scientific">Coccidioides immitis (strain RS)</name>
    <name type="common">Valley fever fungus</name>
    <dbReference type="NCBI Taxonomy" id="246410"/>
    <lineage>
        <taxon>Eukaryota</taxon>
        <taxon>Fungi</taxon>
        <taxon>Dikarya</taxon>
        <taxon>Ascomycota</taxon>
        <taxon>Pezizomycotina</taxon>
        <taxon>Eurotiomycetes</taxon>
        <taxon>Eurotiomycetidae</taxon>
        <taxon>Onygenales</taxon>
        <taxon>Onygenaceae</taxon>
        <taxon>Coccidioides</taxon>
    </lineage>
</organism>
<proteinExistence type="inferred from homology"/>
<dbReference type="EMBL" id="GG704915">
    <property type="protein sequence ID" value="EAS27835.3"/>
    <property type="molecule type" value="Genomic_DNA"/>
</dbReference>
<dbReference type="RefSeq" id="XP_001239418.1">
    <property type="nucleotide sequence ID" value="XM_001239417.2"/>
</dbReference>
<dbReference type="FunCoup" id="Q1DKX4">
    <property type="interactions" value="48"/>
</dbReference>
<dbReference type="STRING" id="246410.Q1DKX4"/>
<dbReference type="GeneID" id="4558321"/>
<dbReference type="KEGG" id="cim:CIMG_09039"/>
<dbReference type="VEuPathDB" id="FungiDB:CIMG_09039"/>
<dbReference type="InParanoid" id="Q1DKX4"/>
<dbReference type="OMA" id="TVWEVKD"/>
<dbReference type="OrthoDB" id="2189463at2759"/>
<dbReference type="Proteomes" id="UP000001261">
    <property type="component" value="Unassembled WGS sequence"/>
</dbReference>
<dbReference type="GO" id="GO:0005789">
    <property type="term" value="C:endoplasmic reticulum membrane"/>
    <property type="evidence" value="ECO:0007669"/>
    <property type="project" value="UniProtKB-SubCell"/>
</dbReference>
<dbReference type="GO" id="GO:0051082">
    <property type="term" value="F:unfolded protein binding"/>
    <property type="evidence" value="ECO:0007669"/>
    <property type="project" value="TreeGrafter"/>
</dbReference>
<dbReference type="GO" id="GO:0071555">
    <property type="term" value="P:cell wall organization"/>
    <property type="evidence" value="ECO:0007669"/>
    <property type="project" value="UniProtKB-KW"/>
</dbReference>
<dbReference type="GO" id="GO:0006457">
    <property type="term" value="P:protein folding"/>
    <property type="evidence" value="ECO:0007669"/>
    <property type="project" value="TreeGrafter"/>
</dbReference>
<dbReference type="GO" id="GO:0015031">
    <property type="term" value="P:protein transport"/>
    <property type="evidence" value="ECO:0007669"/>
    <property type="project" value="UniProtKB-KW"/>
</dbReference>
<dbReference type="InterPro" id="IPR022057">
    <property type="entry name" value="Chs7"/>
</dbReference>
<dbReference type="PANTHER" id="PTHR35329">
    <property type="entry name" value="CHITIN SYNTHASE EXPORT CHAPERONE"/>
    <property type="match status" value="1"/>
</dbReference>
<dbReference type="PANTHER" id="PTHR35329:SF2">
    <property type="entry name" value="CHITIN SYNTHASE EXPORT CHAPERONE"/>
    <property type="match status" value="1"/>
</dbReference>
<dbReference type="Pfam" id="PF12271">
    <property type="entry name" value="Chs7"/>
    <property type="match status" value="1"/>
</dbReference>
<comment type="function">
    <text evidence="1">Chaperone required for the export of the chitin synthase CHS3 from the endoplasmic reticulum.</text>
</comment>
<comment type="subunit">
    <text evidence="1">Interacts with CHS3.</text>
</comment>
<comment type="subcellular location">
    <subcellularLocation>
        <location evidence="1">Endoplasmic reticulum membrane</location>
        <topology evidence="1">Multi-pass membrane protein</topology>
    </subcellularLocation>
</comment>
<comment type="similarity">
    <text evidence="3">Belongs to the CHS7 family.</text>
</comment>
<evidence type="ECO:0000250" key="1"/>
<evidence type="ECO:0000255" key="2"/>
<evidence type="ECO:0000305" key="3"/>
<reference key="1">
    <citation type="journal article" date="2009" name="Genome Res.">
        <title>Comparative genomic analyses of the human fungal pathogens Coccidioides and their relatives.</title>
        <authorList>
            <person name="Sharpton T.J."/>
            <person name="Stajich J.E."/>
            <person name="Rounsley S.D."/>
            <person name="Gardner M.J."/>
            <person name="Wortman J.R."/>
            <person name="Jordar V.S."/>
            <person name="Maiti R."/>
            <person name="Kodira C.D."/>
            <person name="Neafsey D.E."/>
            <person name="Zeng Q."/>
            <person name="Hung C.-Y."/>
            <person name="McMahan C."/>
            <person name="Muszewska A."/>
            <person name="Grynberg M."/>
            <person name="Mandel M.A."/>
            <person name="Kellner E.M."/>
            <person name="Barker B.M."/>
            <person name="Galgiani J.N."/>
            <person name="Orbach M.J."/>
            <person name="Kirkland T.N."/>
            <person name="Cole G.T."/>
            <person name="Henn M.R."/>
            <person name="Birren B.W."/>
            <person name="Taylor J.W."/>
        </authorList>
    </citation>
    <scope>NUCLEOTIDE SEQUENCE [LARGE SCALE GENOMIC DNA]</scope>
    <source>
        <strain>RS</strain>
    </source>
</reference>
<reference key="2">
    <citation type="journal article" date="2010" name="Genome Res.">
        <title>Population genomic sequencing of Coccidioides fungi reveals recent hybridization and transposon control.</title>
        <authorList>
            <person name="Neafsey D.E."/>
            <person name="Barker B.M."/>
            <person name="Sharpton T.J."/>
            <person name="Stajich J.E."/>
            <person name="Park D.J."/>
            <person name="Whiston E."/>
            <person name="Hung C.-Y."/>
            <person name="McMahan C."/>
            <person name="White J."/>
            <person name="Sykes S."/>
            <person name="Heiman D."/>
            <person name="Young S."/>
            <person name="Zeng Q."/>
            <person name="Abouelleil A."/>
            <person name="Aftuck L."/>
            <person name="Bessette D."/>
            <person name="Brown A."/>
            <person name="FitzGerald M."/>
            <person name="Lui A."/>
            <person name="Macdonald J.P."/>
            <person name="Priest M."/>
            <person name="Orbach M.J."/>
            <person name="Galgiani J.N."/>
            <person name="Kirkland T.N."/>
            <person name="Cole G.T."/>
            <person name="Birren B.W."/>
            <person name="Henn M.R."/>
            <person name="Taylor J.W."/>
            <person name="Rounsley S.D."/>
        </authorList>
    </citation>
    <scope>GENOME REANNOTATION</scope>
    <source>
        <strain>RS</strain>
    </source>
</reference>
<sequence>MSFGQFDSLCRKAAIPLCSLVGSSSLSGTKGILPSCYARNIEVANTIIFQGATDVMHIVALAMTAIMIIHVRSKFTAVGRKEIITFFYIYMALTICSLVLDSGVAPPGNAVFPFFAAVQNGFASALCTCLLVNGFVGFQLYEDGTALSVWLLRLSSLGMFLISGAVSLLTFKSWAGLSPSNTIGLFVVVYILNAICLFVYVVMQIILVVNTLQDRWPLWHITFGVFFFIIGQVILYSFSAVICESVQHYLDGLFFATLCNLLAVMMIYKYWDSITKEDLEFSVGLKQNNWEVKELLPEEERRATVYLDTNSEYAGSVYHHRSSTYGGQSNY</sequence>
<gene>
    <name type="primary">CHS7</name>
    <name type="ORF">CIMG_09039</name>
</gene>
<feature type="chain" id="PRO_0000280574" description="Chitin synthase export chaperone">
    <location>
        <begin position="1"/>
        <end position="331"/>
    </location>
</feature>
<feature type="transmembrane region" description="Helical" evidence="2">
    <location>
        <begin position="51"/>
        <end position="71"/>
    </location>
</feature>
<feature type="transmembrane region" description="Helical" evidence="2">
    <location>
        <begin position="83"/>
        <end position="103"/>
    </location>
</feature>
<feature type="transmembrane region" description="Helical" evidence="2">
    <location>
        <begin position="111"/>
        <end position="131"/>
    </location>
</feature>
<feature type="transmembrane region" description="Helical" evidence="2">
    <location>
        <begin position="157"/>
        <end position="177"/>
    </location>
</feature>
<feature type="transmembrane region" description="Helical" evidence="2">
    <location>
        <begin position="183"/>
        <end position="203"/>
    </location>
</feature>
<feature type="transmembrane region" description="Helical" evidence="2">
    <location>
        <begin position="223"/>
        <end position="243"/>
    </location>
</feature>
<feature type="transmembrane region" description="Helical" evidence="2">
    <location>
        <begin position="248"/>
        <end position="268"/>
    </location>
</feature>